<comment type="subunit">
    <text evidence="4">Homodimer.</text>
</comment>
<comment type="subcellular location">
    <subcellularLocation>
        <location evidence="4">Cell membrane</location>
        <topology evidence="4">Lipid-anchor</topology>
        <topology evidence="4">GPI-anchor</topology>
    </subcellularLocation>
    <subcellularLocation>
        <location evidence="4">Cell projection</location>
        <location evidence="4">Filopodium</location>
    </subcellularLocation>
</comment>
<comment type="tissue specificity">
    <text evidence="3">Expressed in embryonic tissue and adult lung, kidney, brain, liver and spleen.</text>
</comment>
<comment type="PTM">
    <text evidence="4">O-glycosylated.</text>
</comment>
<dbReference type="EMBL" id="AJ315548">
    <property type="protein sequence ID" value="CAC85545.1"/>
    <property type="molecule type" value="mRNA"/>
</dbReference>
<dbReference type="EMBL" id="AF109905">
    <property type="protein sequence ID" value="AAC84158.1"/>
    <property type="molecule type" value="Genomic_DNA"/>
</dbReference>
<dbReference type="EMBL" id="BC131988">
    <property type="protein sequence ID" value="AAI31989.1"/>
    <property type="molecule type" value="mRNA"/>
</dbReference>
<dbReference type="EMBL" id="BC131990">
    <property type="protein sequence ID" value="AAI31991.1"/>
    <property type="molecule type" value="mRNA"/>
</dbReference>
<dbReference type="CCDS" id="CCDS28678.1"/>
<dbReference type="RefSeq" id="NP_258439.1">
    <property type="nucleotide sequence ID" value="NM_033478.3"/>
</dbReference>
<dbReference type="FunCoup" id="Q9Z1Q3">
    <property type="interactions" value="9"/>
</dbReference>
<dbReference type="STRING" id="10090.ENSMUSP00000007259"/>
<dbReference type="GlyCosmos" id="Q9Z1Q3">
    <property type="glycosylation" value="1 site, No reported glycans"/>
</dbReference>
<dbReference type="GlyGen" id="Q9Z1Q3">
    <property type="glycosylation" value="1 site"/>
</dbReference>
<dbReference type="iPTMnet" id="Q9Z1Q3"/>
<dbReference type="PhosphoSitePlus" id="Q9Z1Q3"/>
<dbReference type="PaxDb" id="10090-ENSMUSP00000007259"/>
<dbReference type="ProteomicsDB" id="292057"/>
<dbReference type="ABCD" id="Q9Z1Q3">
    <property type="antibodies" value="11 sequenced antibodies"/>
</dbReference>
<dbReference type="Antibodypedia" id="50491">
    <property type="antibodies" value="107 antibodies from 13 providers"/>
</dbReference>
<dbReference type="Ensembl" id="ENSMUST00000007259.4">
    <property type="protein sequence ID" value="ENSMUSP00000007259.4"/>
    <property type="gene ID" value="ENSMUSG00000073413.10"/>
</dbReference>
<dbReference type="GeneID" id="114654"/>
<dbReference type="KEGG" id="mmu:114654"/>
<dbReference type="UCSC" id="uc008cfn.1">
    <property type="organism name" value="mouse"/>
</dbReference>
<dbReference type="AGR" id="MGI:2148931"/>
<dbReference type="CTD" id="58530"/>
<dbReference type="MGI" id="MGI:2148931">
    <property type="gene designation" value="Ly6g6d"/>
</dbReference>
<dbReference type="VEuPathDB" id="HostDB:ENSMUSG00000073413"/>
<dbReference type="eggNOG" id="ENOG502SNF5">
    <property type="taxonomic scope" value="Eukaryota"/>
</dbReference>
<dbReference type="GeneTree" id="ENSGT00390000015960"/>
<dbReference type="HOGENOM" id="CLU_1824727_0_0_1"/>
<dbReference type="InParanoid" id="Q9Z1Q3"/>
<dbReference type="OMA" id="QHQPACV"/>
<dbReference type="OrthoDB" id="9436841at2759"/>
<dbReference type="PhylomeDB" id="Q9Z1Q3"/>
<dbReference type="Reactome" id="R-MMU-163125">
    <property type="pathway name" value="Post-translational modification: synthesis of GPI-anchored proteins"/>
</dbReference>
<dbReference type="BioGRID-ORCS" id="114654">
    <property type="hits" value="4 hits in 78 CRISPR screens"/>
</dbReference>
<dbReference type="PRO" id="PR:Q9Z1Q3"/>
<dbReference type="Proteomes" id="UP000000589">
    <property type="component" value="Chromosome 17"/>
</dbReference>
<dbReference type="RNAct" id="Q9Z1Q3">
    <property type="molecule type" value="protein"/>
</dbReference>
<dbReference type="Bgee" id="ENSMUSG00000073413">
    <property type="expression patterns" value="Expressed in lip and 71 other cell types or tissues"/>
</dbReference>
<dbReference type="GO" id="GO:0009897">
    <property type="term" value="C:external side of plasma membrane"/>
    <property type="evidence" value="ECO:0007669"/>
    <property type="project" value="Ensembl"/>
</dbReference>
<dbReference type="GO" id="GO:0030175">
    <property type="term" value="C:filopodium"/>
    <property type="evidence" value="ECO:0007669"/>
    <property type="project" value="UniProtKB-SubCell"/>
</dbReference>
<dbReference type="GO" id="GO:0032991">
    <property type="term" value="C:protein-containing complex"/>
    <property type="evidence" value="ECO:0000314"/>
    <property type="project" value="UniProtKB"/>
</dbReference>
<dbReference type="GO" id="GO:0045202">
    <property type="term" value="C:synapse"/>
    <property type="evidence" value="ECO:0007669"/>
    <property type="project" value="GOC"/>
</dbReference>
<dbReference type="GO" id="GO:0030550">
    <property type="term" value="F:acetylcholine receptor inhibitor activity"/>
    <property type="evidence" value="ECO:0000314"/>
    <property type="project" value="MGI"/>
</dbReference>
<dbReference type="GO" id="GO:0042802">
    <property type="term" value="F:identical protein binding"/>
    <property type="evidence" value="ECO:0000314"/>
    <property type="project" value="UniProtKB"/>
</dbReference>
<dbReference type="GO" id="GO:0095500">
    <property type="term" value="P:acetylcholine receptor signaling pathway"/>
    <property type="evidence" value="ECO:0000314"/>
    <property type="project" value="MGI"/>
</dbReference>
<dbReference type="CDD" id="cd23547">
    <property type="entry name" value="TFP_LU_ECD_Ly6G6d"/>
    <property type="match status" value="1"/>
</dbReference>
<dbReference type="FunFam" id="2.10.60.10:FF:000040">
    <property type="entry name" value="Lymphocyte antigen 6 complex locus G6D"/>
    <property type="match status" value="1"/>
</dbReference>
<dbReference type="Gene3D" id="2.10.60.10">
    <property type="entry name" value="CD59"/>
    <property type="match status" value="1"/>
</dbReference>
<dbReference type="InterPro" id="IPR016054">
    <property type="entry name" value="LY6_UPA_recep-like"/>
</dbReference>
<dbReference type="InterPro" id="IPR026524">
    <property type="entry name" value="LY6G6d/LY6G6f"/>
</dbReference>
<dbReference type="InterPro" id="IPR045860">
    <property type="entry name" value="Snake_toxin-like_sf"/>
</dbReference>
<dbReference type="PANTHER" id="PTHR32286:SF9">
    <property type="entry name" value="LYMPHOCYTE ANTIGEN 6 COMPLEX LOCUS PROTEIN G6D"/>
    <property type="match status" value="1"/>
</dbReference>
<dbReference type="PANTHER" id="PTHR32286">
    <property type="entry name" value="LYMPHOCYTE ANTIGEN 6 COMPLEX LOCUS PROTEIN G6F"/>
    <property type="match status" value="1"/>
</dbReference>
<dbReference type="Pfam" id="PF00021">
    <property type="entry name" value="UPAR_LY6"/>
    <property type="match status" value="1"/>
</dbReference>
<dbReference type="SUPFAM" id="SSF57302">
    <property type="entry name" value="Snake toxin-like"/>
    <property type="match status" value="1"/>
</dbReference>
<organism>
    <name type="scientific">Mus musculus</name>
    <name type="common">Mouse</name>
    <dbReference type="NCBI Taxonomy" id="10090"/>
    <lineage>
        <taxon>Eukaryota</taxon>
        <taxon>Metazoa</taxon>
        <taxon>Chordata</taxon>
        <taxon>Craniata</taxon>
        <taxon>Vertebrata</taxon>
        <taxon>Euteleostomi</taxon>
        <taxon>Mammalia</taxon>
        <taxon>Eutheria</taxon>
        <taxon>Euarchontoglires</taxon>
        <taxon>Glires</taxon>
        <taxon>Rodentia</taxon>
        <taxon>Myomorpha</taxon>
        <taxon>Muroidea</taxon>
        <taxon>Muridae</taxon>
        <taxon>Murinae</taxon>
        <taxon>Mus</taxon>
        <taxon>Mus</taxon>
    </lineage>
</organism>
<gene>
    <name type="primary">Ly6g6d</name>
    <name type="synonym">Ng25</name>
</gene>
<feature type="signal peptide" evidence="2">
    <location>
        <begin position="1"/>
        <end position="19"/>
    </location>
</feature>
<feature type="chain" id="PRO_0000323709" description="Lymphocyte antigen 6 complex locus protein G6d">
    <location>
        <begin position="20"/>
        <end position="108"/>
    </location>
</feature>
<feature type="propeptide" id="PRO_0000323710" description="Removed in mature form" evidence="2">
    <location>
        <begin position="109"/>
        <end position="135"/>
    </location>
</feature>
<feature type="domain" description="UPAR/Ly6">
    <location>
        <begin position="22"/>
        <end position="121"/>
    </location>
</feature>
<feature type="lipid moiety-binding region" description="GPI-anchor amidated asparagine" evidence="2">
    <location>
        <position position="108"/>
    </location>
</feature>
<feature type="glycosylation site" description="O-linked (GalNAc...) threonine" evidence="2">
    <location>
        <position position="68"/>
    </location>
</feature>
<feature type="disulfide bond" evidence="1">
    <location>
        <begin position="24"/>
        <end position="48"/>
    </location>
</feature>
<feature type="disulfide bond" evidence="1">
    <location>
        <begin position="27"/>
        <end position="35"/>
    </location>
</feature>
<feature type="disulfide bond" evidence="1">
    <location>
        <begin position="42"/>
        <end position="76"/>
    </location>
</feature>
<feature type="disulfide bond" evidence="1">
    <location>
        <begin position="82"/>
        <end position="101"/>
    </location>
</feature>
<feature type="disulfide bond" evidence="1">
    <location>
        <begin position="102"/>
        <end position="107"/>
    </location>
</feature>
<sequence>MNSQLVGILLSALLGVALGHRTRCYDCGGGPSNSCKQTVITCGEGERCGFLDRKPQPSSEQAKQPSATLSHHYPACVATHHCNQVAIESVGDVTFTTQKNCCFGDLCNSAVASSVTPLCILAAAVTTLAWLLPGL</sequence>
<evidence type="ECO:0000250" key="1"/>
<evidence type="ECO:0000255" key="2"/>
<evidence type="ECO:0000269" key="3">
    <source>
    </source>
</evidence>
<evidence type="ECO:0000269" key="4">
    <source>
    </source>
</evidence>
<keyword id="KW-1003">Cell membrane</keyword>
<keyword id="KW-0966">Cell projection</keyword>
<keyword id="KW-1015">Disulfide bond</keyword>
<keyword id="KW-0325">Glycoprotein</keyword>
<keyword id="KW-0336">GPI-anchor</keyword>
<keyword id="KW-0449">Lipoprotein</keyword>
<keyword id="KW-0472">Membrane</keyword>
<keyword id="KW-1185">Reference proteome</keyword>
<keyword id="KW-0732">Signal</keyword>
<name>LY66D_MOUSE</name>
<reference key="1">
    <citation type="journal article" date="2002" name="Genomics">
        <title>Transcriptional analysis of a novel cluster of LY-6 family members in the human and mouse major histocompatibility complex: five genes with many splice forms.</title>
        <authorList>
            <person name="Mallya M."/>
            <person name="Campbell R.D."/>
            <person name="Aguado B."/>
        </authorList>
    </citation>
    <scope>NUCLEOTIDE SEQUENCE [MRNA]</scope>
    <scope>TISSUE SPECIFICITY</scope>
    <source>
        <strain>129</strain>
    </source>
</reference>
<reference key="2">
    <citation type="journal article" date="2003" name="Genome Res.">
        <title>Analysis of the gene-dense major histocompatibility complex class III region and its comparison to mouse.</title>
        <authorList>
            <person name="Xie T."/>
            <person name="Rowen L."/>
            <person name="Aguado B."/>
            <person name="Ahearn M.E."/>
            <person name="Madan A."/>
            <person name="Qin S."/>
            <person name="Campbell R.D."/>
            <person name="Hood L."/>
        </authorList>
    </citation>
    <scope>NUCLEOTIDE SEQUENCE [LARGE SCALE GENOMIC DNA]</scope>
    <source>
        <strain>129</strain>
    </source>
</reference>
<reference key="3">
    <citation type="journal article" date="2004" name="Genome Res.">
        <title>The status, quality, and expansion of the NIH full-length cDNA project: the Mammalian Gene Collection (MGC).</title>
        <authorList>
            <consortium name="The MGC Project Team"/>
        </authorList>
    </citation>
    <scope>NUCLEOTIDE SEQUENCE [LARGE SCALE MRNA]</scope>
    <source>
        <tissue>Brain</tissue>
    </source>
</reference>
<reference key="4">
    <citation type="journal article" date="2006" name="Protein Sci.">
        <title>Characterization of the five novel Ly-6 superfamily members encoded in the MHC, and detection of cells expressing their potential ligands.</title>
        <authorList>
            <person name="Mallya M."/>
            <person name="Campbell R.D."/>
            <person name="Aguado B."/>
        </authorList>
    </citation>
    <scope>GLYCOSYLATION</scope>
    <scope>SUBCELLULAR LOCATION</scope>
    <scope>SUBUNIT</scope>
    <scope>GPI-ANCHOR</scope>
</reference>
<protein>
    <recommendedName>
        <fullName>Lymphocyte antigen 6 complex locus protein G6d</fullName>
    </recommendedName>
</protein>
<accession>Q9Z1Q3</accession>
<proteinExistence type="evidence at protein level"/>